<keyword id="KW-1003">Cell membrane</keyword>
<keyword id="KW-0406">Ion transport</keyword>
<keyword id="KW-0472">Membrane</keyword>
<keyword id="KW-0630">Potassium</keyword>
<keyword id="KW-0633">Potassium transport</keyword>
<keyword id="KW-0812">Transmembrane</keyword>
<keyword id="KW-1133">Transmembrane helix</keyword>
<keyword id="KW-0813">Transport</keyword>
<comment type="function">
    <text evidence="1">Part of the high-affinity ATP-driven potassium transport (or Kdp) system, which catalyzes the hydrolysis of ATP coupled with the electrogenic transport of potassium into the cytoplasm. This subunit binds the extracellular potassium ions and delivers the ions to the membrane domain of KdpB through an intramembrane tunnel.</text>
</comment>
<comment type="subunit">
    <text evidence="1">The system is composed of three essential subunits: KdpA, KdpB and KdpC.</text>
</comment>
<comment type="subcellular location">
    <subcellularLocation>
        <location evidence="1">Cell membrane</location>
        <topology evidence="1">Multi-pass membrane protein</topology>
    </subcellularLocation>
</comment>
<comment type="similarity">
    <text evidence="1">Belongs to the KdpA family.</text>
</comment>
<name>KDPA_HERA2</name>
<accession>A9AXU9</accession>
<dbReference type="EMBL" id="CP000875">
    <property type="protein sequence ID" value="ABX04915.1"/>
    <property type="molecule type" value="Genomic_DNA"/>
</dbReference>
<dbReference type="SMR" id="A9AXU9"/>
<dbReference type="STRING" id="316274.Haur_2275"/>
<dbReference type="KEGG" id="hau:Haur_2275"/>
<dbReference type="eggNOG" id="COG2060">
    <property type="taxonomic scope" value="Bacteria"/>
</dbReference>
<dbReference type="HOGENOM" id="CLU_018614_3_0_0"/>
<dbReference type="InParanoid" id="A9AXU9"/>
<dbReference type="Proteomes" id="UP000000787">
    <property type="component" value="Chromosome"/>
</dbReference>
<dbReference type="GO" id="GO:0005886">
    <property type="term" value="C:plasma membrane"/>
    <property type="evidence" value="ECO:0007669"/>
    <property type="project" value="UniProtKB-SubCell"/>
</dbReference>
<dbReference type="GO" id="GO:0008556">
    <property type="term" value="F:P-type potassium transmembrane transporter activity"/>
    <property type="evidence" value="ECO:0007669"/>
    <property type="project" value="InterPro"/>
</dbReference>
<dbReference type="GO" id="GO:0030955">
    <property type="term" value="F:potassium ion binding"/>
    <property type="evidence" value="ECO:0007669"/>
    <property type="project" value="UniProtKB-UniRule"/>
</dbReference>
<dbReference type="HAMAP" id="MF_00275">
    <property type="entry name" value="KdpA"/>
    <property type="match status" value="1"/>
</dbReference>
<dbReference type="InterPro" id="IPR004623">
    <property type="entry name" value="KdpA"/>
</dbReference>
<dbReference type="NCBIfam" id="TIGR00680">
    <property type="entry name" value="kdpA"/>
    <property type="match status" value="1"/>
</dbReference>
<dbReference type="PANTHER" id="PTHR30607">
    <property type="entry name" value="POTASSIUM-TRANSPORTING ATPASE A CHAIN"/>
    <property type="match status" value="1"/>
</dbReference>
<dbReference type="PANTHER" id="PTHR30607:SF2">
    <property type="entry name" value="POTASSIUM-TRANSPORTING ATPASE POTASSIUM-BINDING SUBUNIT"/>
    <property type="match status" value="1"/>
</dbReference>
<dbReference type="Pfam" id="PF03814">
    <property type="entry name" value="KdpA"/>
    <property type="match status" value="1"/>
</dbReference>
<dbReference type="PIRSF" id="PIRSF001294">
    <property type="entry name" value="K_ATPaseA"/>
    <property type="match status" value="1"/>
</dbReference>
<feature type="chain" id="PRO_1000114686" description="Potassium-transporting ATPase potassium-binding subunit">
    <location>
        <begin position="1"/>
        <end position="579"/>
    </location>
</feature>
<feature type="transmembrane region" description="Helical" evidence="1">
    <location>
        <begin position="1"/>
        <end position="21"/>
    </location>
</feature>
<feature type="transmembrane region" description="Helical" evidence="1">
    <location>
        <begin position="64"/>
        <end position="84"/>
    </location>
</feature>
<feature type="transmembrane region" description="Helical" evidence="1">
    <location>
        <begin position="135"/>
        <end position="155"/>
    </location>
</feature>
<feature type="transmembrane region" description="Helical" evidence="1">
    <location>
        <begin position="178"/>
        <end position="198"/>
    </location>
</feature>
<feature type="transmembrane region" description="Helical" evidence="1">
    <location>
        <begin position="265"/>
        <end position="285"/>
    </location>
</feature>
<feature type="transmembrane region" description="Helical" evidence="1">
    <location>
        <begin position="293"/>
        <end position="313"/>
    </location>
</feature>
<feature type="transmembrane region" description="Helical" evidence="1">
    <location>
        <begin position="398"/>
        <end position="418"/>
    </location>
</feature>
<feature type="transmembrane region" description="Helical" evidence="1">
    <location>
        <begin position="435"/>
        <end position="455"/>
    </location>
</feature>
<feature type="transmembrane region" description="Helical" evidence="1">
    <location>
        <begin position="503"/>
        <end position="523"/>
    </location>
</feature>
<feature type="transmembrane region" description="Helical" evidence="1">
    <location>
        <begin position="549"/>
        <end position="569"/>
    </location>
</feature>
<organism>
    <name type="scientific">Herpetosiphon aurantiacus (strain ATCC 23779 / DSM 785 / 114-95)</name>
    <dbReference type="NCBI Taxonomy" id="316274"/>
    <lineage>
        <taxon>Bacteria</taxon>
        <taxon>Bacillati</taxon>
        <taxon>Chloroflexota</taxon>
        <taxon>Chloroflexia</taxon>
        <taxon>Herpetosiphonales</taxon>
        <taxon>Herpetosiphonaceae</taxon>
        <taxon>Herpetosiphon</taxon>
    </lineage>
</organism>
<gene>
    <name evidence="1" type="primary">kdpA</name>
    <name type="ordered locus">Haur_2275</name>
</gene>
<protein>
    <recommendedName>
        <fullName evidence="1">Potassium-transporting ATPase potassium-binding subunit</fullName>
    </recommendedName>
    <alternativeName>
        <fullName evidence="1">ATP phosphohydrolase [potassium-transporting] A chain</fullName>
    </alternativeName>
    <alternativeName>
        <fullName evidence="1">Potassium-binding and translocating subunit A</fullName>
    </alternativeName>
    <alternativeName>
        <fullName evidence="1">Potassium-translocating ATPase A chain</fullName>
    </alternativeName>
</protein>
<sequence length="579" mass="61120">MISNSVIQIGIFLVVLMACVVPLGRYMAKVYGENPPLQGFFGPIERLIYRLLGIDAKSEMHWKHYALALLGFNAMGMLLLYGLQRMQAWLPLNPQQLPAVSADSAFNTAASFVSNTNWQGYAGETTMSYLTQMLGLTVQNFVSAATGMAVLIGLIRGIARRSTSTIGNFWVDLTRSTIYILLPLALVLSVTLVSQGVVQTFSPSQTVELIQPIVNADGTTISQQTIALGPAASQIAIKQLGTNGGGFFNVNSAHPLENPTPLSNFLELLSILLIPAALCYTFGLMVGDKRQGWAILATMTIILLGFTVLAVSAEQAGNPLYQKLGVDDQASALQAGGNLEGKETRFGIVNSALWATVTTAASNGSVNSMHDSYTPLGGLAPMVLMQLGEVVFGGVGSGLYGMLIFAIIAVFVAGLMVGRTPEYLGKKIEAFEMKMAALIILIPCVMTLLITAIAVSSESGRATVFNSGAHGFSEVLYAATSAANNNGSAFAGLGANTPFYNTWLGIAMLVSRFWLIVPTLAIAGSLAGKKLIPQSAGTLPTHTPLFVSLLIGVVLIVGALTFIPALALGPIVEHLLLSL</sequence>
<proteinExistence type="inferred from homology"/>
<evidence type="ECO:0000255" key="1">
    <source>
        <dbReference type="HAMAP-Rule" id="MF_00275"/>
    </source>
</evidence>
<reference key="1">
    <citation type="journal article" date="2011" name="Stand. Genomic Sci.">
        <title>Complete genome sequence of the filamentous gliding predatory bacterium Herpetosiphon aurantiacus type strain (114-95(T)).</title>
        <authorList>
            <person name="Kiss H."/>
            <person name="Nett M."/>
            <person name="Domin N."/>
            <person name="Martin K."/>
            <person name="Maresca J.A."/>
            <person name="Copeland A."/>
            <person name="Lapidus A."/>
            <person name="Lucas S."/>
            <person name="Berry K.W."/>
            <person name="Glavina Del Rio T."/>
            <person name="Dalin E."/>
            <person name="Tice H."/>
            <person name="Pitluck S."/>
            <person name="Richardson P."/>
            <person name="Bruce D."/>
            <person name="Goodwin L."/>
            <person name="Han C."/>
            <person name="Detter J.C."/>
            <person name="Schmutz J."/>
            <person name="Brettin T."/>
            <person name="Land M."/>
            <person name="Hauser L."/>
            <person name="Kyrpides N.C."/>
            <person name="Ivanova N."/>
            <person name="Goeker M."/>
            <person name="Woyke T."/>
            <person name="Klenk H.P."/>
            <person name="Bryant D.A."/>
        </authorList>
    </citation>
    <scope>NUCLEOTIDE SEQUENCE [LARGE SCALE GENOMIC DNA]</scope>
    <source>
        <strain>ATCC 23779 / DSM 785 / 114-95</strain>
    </source>
</reference>